<keyword id="KW-0004">4Fe-4S</keyword>
<keyword id="KW-0150">Chloroplast</keyword>
<keyword id="KW-0408">Iron</keyword>
<keyword id="KW-0411">Iron-sulfur</keyword>
<keyword id="KW-0472">Membrane</keyword>
<keyword id="KW-0479">Metal-binding</keyword>
<keyword id="KW-0520">NAD</keyword>
<keyword id="KW-0521">NADP</keyword>
<keyword id="KW-0934">Plastid</keyword>
<keyword id="KW-0618">Plastoquinone</keyword>
<keyword id="KW-0874">Quinone</keyword>
<keyword id="KW-0677">Repeat</keyword>
<keyword id="KW-0793">Thylakoid</keyword>
<keyword id="KW-1278">Translocase</keyword>
<reference key="1">
    <citation type="journal article" date="2006" name="BMC Plant Biol.">
        <title>The complete chloroplast genome sequence of Citrus sinensis (L.) Osbeck var 'Ridge Pineapple': organization and phylogenetic relationships to other angiosperms.</title>
        <authorList>
            <person name="Bausher M.G."/>
            <person name="Singh N.D."/>
            <person name="Lee S.-B."/>
            <person name="Jansen R.K."/>
            <person name="Daniell H."/>
        </authorList>
    </citation>
    <scope>NUCLEOTIDE SEQUENCE [LARGE SCALE GENOMIC DNA]</scope>
    <source>
        <strain>cv. Osbeck var. Ridge Pineapple</strain>
    </source>
</reference>
<proteinExistence type="inferred from homology"/>
<dbReference type="EC" id="7.1.1.-" evidence="1"/>
<dbReference type="EMBL" id="DQ864733">
    <property type="protein sequence ID" value="ABI49075.1"/>
    <property type="molecule type" value="Genomic_DNA"/>
</dbReference>
<dbReference type="RefSeq" id="YP_740531.1">
    <property type="nucleotide sequence ID" value="NC_008334.1"/>
</dbReference>
<dbReference type="SMR" id="Q09MC2"/>
<dbReference type="GeneID" id="4271143"/>
<dbReference type="KEGG" id="cit:4271143"/>
<dbReference type="OrthoDB" id="854596at71240"/>
<dbReference type="GO" id="GO:0009535">
    <property type="term" value="C:chloroplast thylakoid membrane"/>
    <property type="evidence" value="ECO:0007669"/>
    <property type="project" value="UniProtKB-SubCell"/>
</dbReference>
<dbReference type="GO" id="GO:0051539">
    <property type="term" value="F:4 iron, 4 sulfur cluster binding"/>
    <property type="evidence" value="ECO:0007669"/>
    <property type="project" value="UniProtKB-KW"/>
</dbReference>
<dbReference type="GO" id="GO:0005506">
    <property type="term" value="F:iron ion binding"/>
    <property type="evidence" value="ECO:0007669"/>
    <property type="project" value="UniProtKB-UniRule"/>
</dbReference>
<dbReference type="GO" id="GO:0008137">
    <property type="term" value="F:NADH dehydrogenase (ubiquinone) activity"/>
    <property type="evidence" value="ECO:0007669"/>
    <property type="project" value="InterPro"/>
</dbReference>
<dbReference type="GO" id="GO:0048038">
    <property type="term" value="F:quinone binding"/>
    <property type="evidence" value="ECO:0007669"/>
    <property type="project" value="UniProtKB-KW"/>
</dbReference>
<dbReference type="GO" id="GO:0019684">
    <property type="term" value="P:photosynthesis, light reaction"/>
    <property type="evidence" value="ECO:0007669"/>
    <property type="project" value="UniProtKB-UniRule"/>
</dbReference>
<dbReference type="FunFam" id="3.30.70.3270:FF:000006">
    <property type="entry name" value="NAD(P)H-quinone oxidoreductase subunit I, chloroplastic"/>
    <property type="match status" value="1"/>
</dbReference>
<dbReference type="Gene3D" id="3.30.70.3270">
    <property type="match status" value="1"/>
</dbReference>
<dbReference type="HAMAP" id="MF_01351">
    <property type="entry name" value="NDH1_NuoI"/>
    <property type="match status" value="1"/>
</dbReference>
<dbReference type="InterPro" id="IPR017896">
    <property type="entry name" value="4Fe4S_Fe-S-bd"/>
</dbReference>
<dbReference type="InterPro" id="IPR017900">
    <property type="entry name" value="4Fe4S_Fe_S_CS"/>
</dbReference>
<dbReference type="InterPro" id="IPR010226">
    <property type="entry name" value="NADH_quinone_OxRdtase_chainI"/>
</dbReference>
<dbReference type="InterPro" id="IPR004497">
    <property type="entry name" value="NDHI"/>
</dbReference>
<dbReference type="NCBIfam" id="TIGR00403">
    <property type="entry name" value="ndhI"/>
    <property type="match status" value="1"/>
</dbReference>
<dbReference type="NCBIfam" id="TIGR01971">
    <property type="entry name" value="NuoI"/>
    <property type="match status" value="1"/>
</dbReference>
<dbReference type="NCBIfam" id="NF004537">
    <property type="entry name" value="PRK05888.1-3"/>
    <property type="match status" value="1"/>
</dbReference>
<dbReference type="PANTHER" id="PTHR47275">
    <property type="entry name" value="NAD(P)H-QUINONE OXIDOREDUCTASE SUBUNIT I, CHLOROPLASTIC"/>
    <property type="match status" value="1"/>
</dbReference>
<dbReference type="PANTHER" id="PTHR47275:SF1">
    <property type="entry name" value="NAD(P)H-QUINONE OXIDOREDUCTASE SUBUNIT I, CHLOROPLASTIC"/>
    <property type="match status" value="1"/>
</dbReference>
<dbReference type="Pfam" id="PF12838">
    <property type="entry name" value="Fer4_7"/>
    <property type="match status" value="1"/>
</dbReference>
<dbReference type="SUPFAM" id="SSF54862">
    <property type="entry name" value="4Fe-4S ferredoxins"/>
    <property type="match status" value="1"/>
</dbReference>
<dbReference type="PROSITE" id="PS00198">
    <property type="entry name" value="4FE4S_FER_1"/>
    <property type="match status" value="2"/>
</dbReference>
<dbReference type="PROSITE" id="PS51379">
    <property type="entry name" value="4FE4S_FER_2"/>
    <property type="match status" value="2"/>
</dbReference>
<protein>
    <recommendedName>
        <fullName evidence="1">NAD(P)H-quinone oxidoreductase subunit I, chloroplastic</fullName>
        <ecNumber evidence="1">7.1.1.-</ecNumber>
    </recommendedName>
    <alternativeName>
        <fullName evidence="1">NAD(P)H dehydrogenase subunit I</fullName>
        <shortName evidence="1">NDH subunit I</shortName>
    </alternativeName>
    <alternativeName>
        <fullName evidence="1">NADH-plastoquinone oxidoreductase subunit I</fullName>
    </alternativeName>
</protein>
<evidence type="ECO:0000255" key="1">
    <source>
        <dbReference type="HAMAP-Rule" id="MF_01351"/>
    </source>
</evidence>
<sequence>MFPMVTGFMNYGQQTIRAARYIGQSFMITLSQANRLPVTIQYPYEKLIPSERFRGRIHFEFDKCIACEVCVRVCPIDLPVVDWKFETDIRKKRLLNYSIDFGICIFCGNCVEYCPTNCLSMTEEYELATYDRHELNYNQIALGRLPMSVIDDFTIRTVLNSPQRKNV</sequence>
<comment type="function">
    <text evidence="1">NDH shuttles electrons from NAD(P)H:plastoquinone, via FMN and iron-sulfur (Fe-S) centers, to quinones in the photosynthetic chain and possibly in a chloroplast respiratory chain. The immediate electron acceptor for the enzyme in this species is believed to be plastoquinone. Couples the redox reaction to proton translocation, and thus conserves the redox energy in a proton gradient.</text>
</comment>
<comment type="catalytic activity">
    <reaction evidence="1">
        <text>a plastoquinone + NADH + (n+1) H(+)(in) = a plastoquinol + NAD(+) + n H(+)(out)</text>
        <dbReference type="Rhea" id="RHEA:42608"/>
        <dbReference type="Rhea" id="RHEA-COMP:9561"/>
        <dbReference type="Rhea" id="RHEA-COMP:9562"/>
        <dbReference type="ChEBI" id="CHEBI:15378"/>
        <dbReference type="ChEBI" id="CHEBI:17757"/>
        <dbReference type="ChEBI" id="CHEBI:57540"/>
        <dbReference type="ChEBI" id="CHEBI:57945"/>
        <dbReference type="ChEBI" id="CHEBI:62192"/>
    </reaction>
</comment>
<comment type="catalytic activity">
    <reaction evidence="1">
        <text>a plastoquinone + NADPH + (n+1) H(+)(in) = a plastoquinol + NADP(+) + n H(+)(out)</text>
        <dbReference type="Rhea" id="RHEA:42612"/>
        <dbReference type="Rhea" id="RHEA-COMP:9561"/>
        <dbReference type="Rhea" id="RHEA-COMP:9562"/>
        <dbReference type="ChEBI" id="CHEBI:15378"/>
        <dbReference type="ChEBI" id="CHEBI:17757"/>
        <dbReference type="ChEBI" id="CHEBI:57783"/>
        <dbReference type="ChEBI" id="CHEBI:58349"/>
        <dbReference type="ChEBI" id="CHEBI:62192"/>
    </reaction>
</comment>
<comment type="cofactor">
    <cofactor evidence="1">
        <name>[4Fe-4S] cluster</name>
        <dbReference type="ChEBI" id="CHEBI:49883"/>
    </cofactor>
    <text evidence="1">Binds 2 [4Fe-4S] clusters per subunit.</text>
</comment>
<comment type="subunit">
    <text evidence="1">NDH is composed of at least 16 different subunits, 5 of which are encoded in the nucleus.</text>
</comment>
<comment type="subcellular location">
    <subcellularLocation>
        <location evidence="1">Plastid</location>
        <location evidence="1">Chloroplast thylakoid membrane</location>
        <topology evidence="1">Peripheral membrane protein</topology>
    </subcellularLocation>
</comment>
<comment type="similarity">
    <text evidence="1">Belongs to the complex I 23 kDa subunit family.</text>
</comment>
<name>NDHI_CITSI</name>
<gene>
    <name evidence="1" type="primary">ndhI</name>
</gene>
<geneLocation type="chloroplast"/>
<organism>
    <name type="scientific">Citrus sinensis</name>
    <name type="common">Sweet orange</name>
    <name type="synonym">Citrus aurantium var. sinensis</name>
    <dbReference type="NCBI Taxonomy" id="2711"/>
    <lineage>
        <taxon>Eukaryota</taxon>
        <taxon>Viridiplantae</taxon>
        <taxon>Streptophyta</taxon>
        <taxon>Embryophyta</taxon>
        <taxon>Tracheophyta</taxon>
        <taxon>Spermatophyta</taxon>
        <taxon>Magnoliopsida</taxon>
        <taxon>eudicotyledons</taxon>
        <taxon>Gunneridae</taxon>
        <taxon>Pentapetalae</taxon>
        <taxon>rosids</taxon>
        <taxon>malvids</taxon>
        <taxon>Sapindales</taxon>
        <taxon>Rutaceae</taxon>
        <taxon>Aurantioideae</taxon>
        <taxon>Citrus</taxon>
    </lineage>
</organism>
<accession>Q09MC2</accession>
<feature type="chain" id="PRO_0000275470" description="NAD(P)H-quinone oxidoreductase subunit I, chloroplastic">
    <location>
        <begin position="1"/>
        <end position="167"/>
    </location>
</feature>
<feature type="domain" description="4Fe-4S ferredoxin-type 1" evidence="1">
    <location>
        <begin position="55"/>
        <end position="84"/>
    </location>
</feature>
<feature type="domain" description="4Fe-4S ferredoxin-type 2" evidence="1">
    <location>
        <begin position="95"/>
        <end position="124"/>
    </location>
</feature>
<feature type="binding site" evidence="1">
    <location>
        <position position="64"/>
    </location>
    <ligand>
        <name>[4Fe-4S] cluster</name>
        <dbReference type="ChEBI" id="CHEBI:49883"/>
        <label>1</label>
    </ligand>
</feature>
<feature type="binding site" evidence="1">
    <location>
        <position position="67"/>
    </location>
    <ligand>
        <name>[4Fe-4S] cluster</name>
        <dbReference type="ChEBI" id="CHEBI:49883"/>
        <label>1</label>
    </ligand>
</feature>
<feature type="binding site" evidence="1">
    <location>
        <position position="70"/>
    </location>
    <ligand>
        <name>[4Fe-4S] cluster</name>
        <dbReference type="ChEBI" id="CHEBI:49883"/>
        <label>1</label>
    </ligand>
</feature>
<feature type="binding site" evidence="1">
    <location>
        <position position="74"/>
    </location>
    <ligand>
        <name>[4Fe-4S] cluster</name>
        <dbReference type="ChEBI" id="CHEBI:49883"/>
        <label>2</label>
    </ligand>
</feature>
<feature type="binding site" evidence="1">
    <location>
        <position position="104"/>
    </location>
    <ligand>
        <name>[4Fe-4S] cluster</name>
        <dbReference type="ChEBI" id="CHEBI:49883"/>
        <label>2</label>
    </ligand>
</feature>
<feature type="binding site" evidence="1">
    <location>
        <position position="107"/>
    </location>
    <ligand>
        <name>[4Fe-4S] cluster</name>
        <dbReference type="ChEBI" id="CHEBI:49883"/>
        <label>2</label>
    </ligand>
</feature>
<feature type="binding site" evidence="1">
    <location>
        <position position="110"/>
    </location>
    <ligand>
        <name>[4Fe-4S] cluster</name>
        <dbReference type="ChEBI" id="CHEBI:49883"/>
        <label>2</label>
    </ligand>
</feature>
<feature type="binding site" evidence="1">
    <location>
        <position position="114"/>
    </location>
    <ligand>
        <name>[4Fe-4S] cluster</name>
        <dbReference type="ChEBI" id="CHEBI:49883"/>
        <label>1</label>
    </ligand>
</feature>